<organism>
    <name type="scientific">Leptospira interrogans serogroup Icterohaemorrhagiae serovar copenhageni (strain Fiocruz L1-130)</name>
    <dbReference type="NCBI Taxonomy" id="267671"/>
    <lineage>
        <taxon>Bacteria</taxon>
        <taxon>Pseudomonadati</taxon>
        <taxon>Spirochaetota</taxon>
        <taxon>Spirochaetia</taxon>
        <taxon>Leptospirales</taxon>
        <taxon>Leptospiraceae</taxon>
        <taxon>Leptospira</taxon>
    </lineage>
</organism>
<keyword id="KW-0028">Amino-acid biosynthesis</keyword>
<keyword id="KW-0100">Branched-chain amino acid biosynthesis</keyword>
<keyword id="KW-0963">Cytoplasm</keyword>
<keyword id="KW-0432">Leucine biosynthesis</keyword>
<keyword id="KW-0460">Magnesium</keyword>
<keyword id="KW-0464">Manganese</keyword>
<keyword id="KW-0479">Metal-binding</keyword>
<keyword id="KW-0520">NAD</keyword>
<keyword id="KW-0560">Oxidoreductase</keyword>
<dbReference type="EC" id="1.1.1.85" evidence="1"/>
<dbReference type="EMBL" id="AE016823">
    <property type="protein sequence ID" value="AAS70357.1"/>
    <property type="molecule type" value="Genomic_DNA"/>
</dbReference>
<dbReference type="RefSeq" id="WP_000799846.1">
    <property type="nucleotide sequence ID" value="NC_005823.1"/>
</dbReference>
<dbReference type="SMR" id="Q72RH7"/>
<dbReference type="GeneID" id="61141667"/>
<dbReference type="KEGG" id="lic:LIC_11768"/>
<dbReference type="HOGENOM" id="CLU_031953_0_3_12"/>
<dbReference type="UniPathway" id="UPA00048">
    <property type="reaction ID" value="UER00072"/>
</dbReference>
<dbReference type="Proteomes" id="UP000007037">
    <property type="component" value="Chromosome I"/>
</dbReference>
<dbReference type="GO" id="GO:0005829">
    <property type="term" value="C:cytosol"/>
    <property type="evidence" value="ECO:0007669"/>
    <property type="project" value="TreeGrafter"/>
</dbReference>
<dbReference type="GO" id="GO:0003862">
    <property type="term" value="F:3-isopropylmalate dehydrogenase activity"/>
    <property type="evidence" value="ECO:0007669"/>
    <property type="project" value="UniProtKB-UniRule"/>
</dbReference>
<dbReference type="GO" id="GO:0000287">
    <property type="term" value="F:magnesium ion binding"/>
    <property type="evidence" value="ECO:0007669"/>
    <property type="project" value="InterPro"/>
</dbReference>
<dbReference type="GO" id="GO:0051287">
    <property type="term" value="F:NAD binding"/>
    <property type="evidence" value="ECO:0007669"/>
    <property type="project" value="InterPro"/>
</dbReference>
<dbReference type="GO" id="GO:0009098">
    <property type="term" value="P:L-leucine biosynthetic process"/>
    <property type="evidence" value="ECO:0007669"/>
    <property type="project" value="UniProtKB-UniRule"/>
</dbReference>
<dbReference type="FunFam" id="3.40.718.10:FF:000004">
    <property type="entry name" value="3-isopropylmalate dehydrogenase"/>
    <property type="match status" value="1"/>
</dbReference>
<dbReference type="Gene3D" id="3.40.718.10">
    <property type="entry name" value="Isopropylmalate Dehydrogenase"/>
    <property type="match status" value="1"/>
</dbReference>
<dbReference type="HAMAP" id="MF_01033">
    <property type="entry name" value="LeuB_type1"/>
    <property type="match status" value="1"/>
</dbReference>
<dbReference type="InterPro" id="IPR019818">
    <property type="entry name" value="IsoCit/isopropylmalate_DH_CS"/>
</dbReference>
<dbReference type="InterPro" id="IPR024084">
    <property type="entry name" value="IsoPropMal-DH-like_dom"/>
</dbReference>
<dbReference type="InterPro" id="IPR004429">
    <property type="entry name" value="Isopropylmalate_DH"/>
</dbReference>
<dbReference type="NCBIfam" id="TIGR00169">
    <property type="entry name" value="leuB"/>
    <property type="match status" value="1"/>
</dbReference>
<dbReference type="PANTHER" id="PTHR42979">
    <property type="entry name" value="3-ISOPROPYLMALATE DEHYDROGENASE"/>
    <property type="match status" value="1"/>
</dbReference>
<dbReference type="PANTHER" id="PTHR42979:SF1">
    <property type="entry name" value="3-ISOPROPYLMALATE DEHYDROGENASE"/>
    <property type="match status" value="1"/>
</dbReference>
<dbReference type="Pfam" id="PF00180">
    <property type="entry name" value="Iso_dh"/>
    <property type="match status" value="1"/>
</dbReference>
<dbReference type="SMART" id="SM01329">
    <property type="entry name" value="Iso_dh"/>
    <property type="match status" value="1"/>
</dbReference>
<dbReference type="SUPFAM" id="SSF53659">
    <property type="entry name" value="Isocitrate/Isopropylmalate dehydrogenase-like"/>
    <property type="match status" value="1"/>
</dbReference>
<dbReference type="PROSITE" id="PS00470">
    <property type="entry name" value="IDH_IMDH"/>
    <property type="match status" value="1"/>
</dbReference>
<name>LEU3_LEPIC</name>
<protein>
    <recommendedName>
        <fullName evidence="1">3-isopropylmalate dehydrogenase</fullName>
        <ecNumber evidence="1">1.1.1.85</ecNumber>
    </recommendedName>
    <alternativeName>
        <fullName evidence="1">3-IPM-DH</fullName>
    </alternativeName>
    <alternativeName>
        <fullName evidence="1">Beta-IPM dehydrogenase</fullName>
        <shortName evidence="1">IMDH</shortName>
    </alternativeName>
</protein>
<evidence type="ECO:0000255" key="1">
    <source>
        <dbReference type="HAMAP-Rule" id="MF_01033"/>
    </source>
</evidence>
<gene>
    <name evidence="1" type="primary">leuB</name>
    <name type="ordered locus">LIC_11768</name>
</gene>
<sequence length="358" mass="38871">MKNVAVLSGDGIGPEVMEIAISVLKKALGAKVSEFQFKEGFVGGIAIDKTGHPLPPETLKLCEESSAILFGSVGGPKWETLPPEKQPERGALLPLRKHFDLFANLRPAIIYPELKNASPVRSDIIGNGLDILILRELTGGIYFGQPKGREGSGQEEFAYDTMKYSRREIERIAKVAFQAARKRNNKVTSIDKANVLTTSVFWKEVVIELHKKEFSDVQLNHLYVDNAAMQLIVNPKQFDVVLCENMFGDILSDEASIITGSIGMLPSASLSESGFGLYEPSGGSAPDIAGKGVANPIAQVLSAALMLRYSFSMEEEANKIETAVRKTIASGKRTRDIAEVGSTIVGTKEIGQLIESFL</sequence>
<feature type="chain" id="PRO_0000083703" description="3-isopropylmalate dehydrogenase">
    <location>
        <begin position="1"/>
        <end position="358"/>
    </location>
</feature>
<feature type="binding site" evidence="1">
    <location>
        <begin position="75"/>
        <end position="88"/>
    </location>
    <ligand>
        <name>NAD(+)</name>
        <dbReference type="ChEBI" id="CHEBI:57540"/>
    </ligand>
</feature>
<feature type="binding site" evidence="1">
    <location>
        <position position="96"/>
    </location>
    <ligand>
        <name>substrate</name>
    </ligand>
</feature>
<feature type="binding site" evidence="1">
    <location>
        <position position="106"/>
    </location>
    <ligand>
        <name>substrate</name>
    </ligand>
</feature>
<feature type="binding site" evidence="1">
    <location>
        <position position="135"/>
    </location>
    <ligand>
        <name>substrate</name>
    </ligand>
</feature>
<feature type="binding site" evidence="1">
    <location>
        <position position="225"/>
    </location>
    <ligand>
        <name>Mg(2+)</name>
        <dbReference type="ChEBI" id="CHEBI:18420"/>
    </ligand>
</feature>
<feature type="binding site" evidence="1">
    <location>
        <position position="225"/>
    </location>
    <ligand>
        <name>substrate</name>
    </ligand>
</feature>
<feature type="binding site" evidence="1">
    <location>
        <position position="249"/>
    </location>
    <ligand>
        <name>Mg(2+)</name>
        <dbReference type="ChEBI" id="CHEBI:18420"/>
    </ligand>
</feature>
<feature type="binding site" evidence="1">
    <location>
        <position position="253"/>
    </location>
    <ligand>
        <name>Mg(2+)</name>
        <dbReference type="ChEBI" id="CHEBI:18420"/>
    </ligand>
</feature>
<feature type="binding site" evidence="1">
    <location>
        <begin position="283"/>
        <end position="295"/>
    </location>
    <ligand>
        <name>NAD(+)</name>
        <dbReference type="ChEBI" id="CHEBI:57540"/>
    </ligand>
</feature>
<feature type="site" description="Important for catalysis" evidence="1">
    <location>
        <position position="142"/>
    </location>
</feature>
<feature type="site" description="Important for catalysis" evidence="1">
    <location>
        <position position="192"/>
    </location>
</feature>
<comment type="function">
    <text evidence="1">Catalyzes the oxidation of 3-carboxy-2-hydroxy-4-methylpentanoate (3-isopropylmalate) to 3-carboxy-4-methyl-2-oxopentanoate. The product decarboxylates to 4-methyl-2 oxopentanoate.</text>
</comment>
<comment type="catalytic activity">
    <reaction evidence="1">
        <text>(2R,3S)-3-isopropylmalate + NAD(+) = 4-methyl-2-oxopentanoate + CO2 + NADH</text>
        <dbReference type="Rhea" id="RHEA:32271"/>
        <dbReference type="ChEBI" id="CHEBI:16526"/>
        <dbReference type="ChEBI" id="CHEBI:17865"/>
        <dbReference type="ChEBI" id="CHEBI:35121"/>
        <dbReference type="ChEBI" id="CHEBI:57540"/>
        <dbReference type="ChEBI" id="CHEBI:57945"/>
        <dbReference type="EC" id="1.1.1.85"/>
    </reaction>
</comment>
<comment type="cofactor">
    <cofactor evidence="1">
        <name>Mg(2+)</name>
        <dbReference type="ChEBI" id="CHEBI:18420"/>
    </cofactor>
    <cofactor evidence="1">
        <name>Mn(2+)</name>
        <dbReference type="ChEBI" id="CHEBI:29035"/>
    </cofactor>
    <text evidence="1">Binds 1 Mg(2+) or Mn(2+) ion per subunit.</text>
</comment>
<comment type="pathway">
    <text evidence="1">Amino-acid biosynthesis; L-leucine biosynthesis; L-leucine from 3-methyl-2-oxobutanoate: step 3/4.</text>
</comment>
<comment type="subunit">
    <text evidence="1">Homodimer.</text>
</comment>
<comment type="subcellular location">
    <subcellularLocation>
        <location evidence="1">Cytoplasm</location>
    </subcellularLocation>
</comment>
<comment type="similarity">
    <text evidence="1">Belongs to the isocitrate and isopropylmalate dehydrogenases family. LeuB type 1 subfamily.</text>
</comment>
<reference key="1">
    <citation type="journal article" date="2004" name="J. Bacteriol.">
        <title>Comparative genomics of two Leptospira interrogans serovars reveals novel insights into physiology and pathogenesis.</title>
        <authorList>
            <person name="Nascimento A.L.T.O."/>
            <person name="Ko A.I."/>
            <person name="Martins E.A.L."/>
            <person name="Monteiro-Vitorello C.B."/>
            <person name="Ho P.L."/>
            <person name="Haake D.A."/>
            <person name="Verjovski-Almeida S."/>
            <person name="Hartskeerl R.A."/>
            <person name="Marques M.V."/>
            <person name="Oliveira M.C."/>
            <person name="Menck C.F.M."/>
            <person name="Leite L.C.C."/>
            <person name="Carrer H."/>
            <person name="Coutinho L.L."/>
            <person name="Degrave W.M."/>
            <person name="Dellagostin O.A."/>
            <person name="El-Dorry H."/>
            <person name="Ferro E.S."/>
            <person name="Ferro M.I.T."/>
            <person name="Furlan L.R."/>
            <person name="Gamberini M."/>
            <person name="Giglioti E.A."/>
            <person name="Goes-Neto A."/>
            <person name="Goldman G.H."/>
            <person name="Goldman M.H.S."/>
            <person name="Harakava R."/>
            <person name="Jeronimo S.M.B."/>
            <person name="Junqueira-de-Azevedo I.L.M."/>
            <person name="Kimura E.T."/>
            <person name="Kuramae E.E."/>
            <person name="Lemos E.G.M."/>
            <person name="Lemos M.V.F."/>
            <person name="Marino C.L."/>
            <person name="Nunes L.R."/>
            <person name="de Oliveira R.C."/>
            <person name="Pereira G.G."/>
            <person name="Reis M.S."/>
            <person name="Schriefer A."/>
            <person name="Siqueira W.J."/>
            <person name="Sommer P."/>
            <person name="Tsai S.M."/>
            <person name="Simpson A.J.G."/>
            <person name="Ferro J.A."/>
            <person name="Camargo L.E.A."/>
            <person name="Kitajima J.P."/>
            <person name="Setubal J.C."/>
            <person name="Van Sluys M.A."/>
        </authorList>
    </citation>
    <scope>NUCLEOTIDE SEQUENCE [LARGE SCALE GENOMIC DNA]</scope>
    <source>
        <strain>Fiocruz L1-130</strain>
    </source>
</reference>
<proteinExistence type="inferred from homology"/>
<accession>Q72RH7</accession>